<protein>
    <recommendedName>
        <fullName evidence="1">Aspartyl/glutamyl-tRNA(Asn/Gln) amidotransferase subunit C</fullName>
        <shortName evidence="1">Asp/Glu-ADT subunit C</shortName>
        <ecNumber evidence="1">6.3.5.-</ecNumber>
    </recommendedName>
</protein>
<proteinExistence type="inferred from homology"/>
<feature type="chain" id="PRO_1000016203" description="Aspartyl/glutamyl-tRNA(Asn/Gln) amidotransferase subunit C">
    <location>
        <begin position="1"/>
        <end position="100"/>
    </location>
</feature>
<accession>A8EXM2</accession>
<evidence type="ECO:0000255" key="1">
    <source>
        <dbReference type="HAMAP-Rule" id="MF_00122"/>
    </source>
</evidence>
<dbReference type="EC" id="6.3.5.-" evidence="1"/>
<dbReference type="EMBL" id="CP000409">
    <property type="protein sequence ID" value="ABV73105.1"/>
    <property type="molecule type" value="Genomic_DNA"/>
</dbReference>
<dbReference type="RefSeq" id="WP_012148306.1">
    <property type="nucleotide sequence ID" value="NC_009879.1"/>
</dbReference>
<dbReference type="SMR" id="A8EXM2"/>
<dbReference type="STRING" id="293613.A1E_00785"/>
<dbReference type="KEGG" id="rcm:A1E_00785"/>
<dbReference type="eggNOG" id="COG0721">
    <property type="taxonomic scope" value="Bacteria"/>
</dbReference>
<dbReference type="HOGENOM" id="CLU_105899_2_0_5"/>
<dbReference type="Proteomes" id="UP000007056">
    <property type="component" value="Chromosome"/>
</dbReference>
<dbReference type="GO" id="GO:0050566">
    <property type="term" value="F:asparaginyl-tRNA synthase (glutamine-hydrolyzing) activity"/>
    <property type="evidence" value="ECO:0007669"/>
    <property type="project" value="RHEA"/>
</dbReference>
<dbReference type="GO" id="GO:0005524">
    <property type="term" value="F:ATP binding"/>
    <property type="evidence" value="ECO:0007669"/>
    <property type="project" value="UniProtKB-KW"/>
</dbReference>
<dbReference type="GO" id="GO:0050567">
    <property type="term" value="F:glutaminyl-tRNA synthase (glutamine-hydrolyzing) activity"/>
    <property type="evidence" value="ECO:0007669"/>
    <property type="project" value="UniProtKB-UniRule"/>
</dbReference>
<dbReference type="GO" id="GO:0070681">
    <property type="term" value="P:glutaminyl-tRNAGln biosynthesis via transamidation"/>
    <property type="evidence" value="ECO:0007669"/>
    <property type="project" value="TreeGrafter"/>
</dbReference>
<dbReference type="GO" id="GO:0006450">
    <property type="term" value="P:regulation of translational fidelity"/>
    <property type="evidence" value="ECO:0007669"/>
    <property type="project" value="InterPro"/>
</dbReference>
<dbReference type="GO" id="GO:0006412">
    <property type="term" value="P:translation"/>
    <property type="evidence" value="ECO:0007669"/>
    <property type="project" value="UniProtKB-UniRule"/>
</dbReference>
<dbReference type="Gene3D" id="1.10.20.60">
    <property type="entry name" value="Glu-tRNAGln amidotransferase C subunit, N-terminal domain"/>
    <property type="match status" value="1"/>
</dbReference>
<dbReference type="HAMAP" id="MF_00122">
    <property type="entry name" value="GatC"/>
    <property type="match status" value="1"/>
</dbReference>
<dbReference type="InterPro" id="IPR036113">
    <property type="entry name" value="Asp/Glu-ADT_sf_sub_c"/>
</dbReference>
<dbReference type="InterPro" id="IPR003837">
    <property type="entry name" value="GatC"/>
</dbReference>
<dbReference type="NCBIfam" id="TIGR00135">
    <property type="entry name" value="gatC"/>
    <property type="match status" value="1"/>
</dbReference>
<dbReference type="PANTHER" id="PTHR15004">
    <property type="entry name" value="GLUTAMYL-TRNA(GLN) AMIDOTRANSFERASE SUBUNIT C, MITOCHONDRIAL"/>
    <property type="match status" value="1"/>
</dbReference>
<dbReference type="PANTHER" id="PTHR15004:SF0">
    <property type="entry name" value="GLUTAMYL-TRNA(GLN) AMIDOTRANSFERASE SUBUNIT C, MITOCHONDRIAL"/>
    <property type="match status" value="1"/>
</dbReference>
<dbReference type="Pfam" id="PF02686">
    <property type="entry name" value="GatC"/>
    <property type="match status" value="1"/>
</dbReference>
<dbReference type="SUPFAM" id="SSF141000">
    <property type="entry name" value="Glu-tRNAGln amidotransferase C subunit"/>
    <property type="match status" value="1"/>
</dbReference>
<name>GATC_RICCK</name>
<comment type="function">
    <text evidence="1">Allows the formation of correctly charged Asn-tRNA(Asn) or Gln-tRNA(Gln) through the transamidation of misacylated Asp-tRNA(Asn) or Glu-tRNA(Gln) in organisms which lack either or both of asparaginyl-tRNA or glutaminyl-tRNA synthetases. The reaction takes place in the presence of glutamine and ATP through an activated phospho-Asp-tRNA(Asn) or phospho-Glu-tRNA(Gln).</text>
</comment>
<comment type="catalytic activity">
    <reaction evidence="1">
        <text>L-glutamyl-tRNA(Gln) + L-glutamine + ATP + H2O = L-glutaminyl-tRNA(Gln) + L-glutamate + ADP + phosphate + H(+)</text>
        <dbReference type="Rhea" id="RHEA:17521"/>
        <dbReference type="Rhea" id="RHEA-COMP:9681"/>
        <dbReference type="Rhea" id="RHEA-COMP:9684"/>
        <dbReference type="ChEBI" id="CHEBI:15377"/>
        <dbReference type="ChEBI" id="CHEBI:15378"/>
        <dbReference type="ChEBI" id="CHEBI:29985"/>
        <dbReference type="ChEBI" id="CHEBI:30616"/>
        <dbReference type="ChEBI" id="CHEBI:43474"/>
        <dbReference type="ChEBI" id="CHEBI:58359"/>
        <dbReference type="ChEBI" id="CHEBI:78520"/>
        <dbReference type="ChEBI" id="CHEBI:78521"/>
        <dbReference type="ChEBI" id="CHEBI:456216"/>
    </reaction>
</comment>
<comment type="catalytic activity">
    <reaction evidence="1">
        <text>L-aspartyl-tRNA(Asn) + L-glutamine + ATP + H2O = L-asparaginyl-tRNA(Asn) + L-glutamate + ADP + phosphate + 2 H(+)</text>
        <dbReference type="Rhea" id="RHEA:14513"/>
        <dbReference type="Rhea" id="RHEA-COMP:9674"/>
        <dbReference type="Rhea" id="RHEA-COMP:9677"/>
        <dbReference type="ChEBI" id="CHEBI:15377"/>
        <dbReference type="ChEBI" id="CHEBI:15378"/>
        <dbReference type="ChEBI" id="CHEBI:29985"/>
        <dbReference type="ChEBI" id="CHEBI:30616"/>
        <dbReference type="ChEBI" id="CHEBI:43474"/>
        <dbReference type="ChEBI" id="CHEBI:58359"/>
        <dbReference type="ChEBI" id="CHEBI:78515"/>
        <dbReference type="ChEBI" id="CHEBI:78516"/>
        <dbReference type="ChEBI" id="CHEBI:456216"/>
    </reaction>
</comment>
<comment type="subunit">
    <text evidence="1">Heterotrimer of A, B and C subunits.</text>
</comment>
<comment type="similarity">
    <text evidence="1">Belongs to the GatC family.</text>
</comment>
<keyword id="KW-0067">ATP-binding</keyword>
<keyword id="KW-0436">Ligase</keyword>
<keyword id="KW-0547">Nucleotide-binding</keyword>
<keyword id="KW-0648">Protein biosynthesis</keyword>
<organism>
    <name type="scientific">Rickettsia canadensis (strain McKiel)</name>
    <dbReference type="NCBI Taxonomy" id="293613"/>
    <lineage>
        <taxon>Bacteria</taxon>
        <taxon>Pseudomonadati</taxon>
        <taxon>Pseudomonadota</taxon>
        <taxon>Alphaproteobacteria</taxon>
        <taxon>Rickettsiales</taxon>
        <taxon>Rickettsiaceae</taxon>
        <taxon>Rickettsieae</taxon>
        <taxon>Rickettsia</taxon>
        <taxon>belli group</taxon>
    </lineage>
</organism>
<gene>
    <name evidence="1" type="primary">gatC</name>
    <name type="ordered locus">A1E_00785</name>
</gene>
<reference key="1">
    <citation type="submission" date="2007-09" db="EMBL/GenBank/DDBJ databases">
        <title>Complete genome sequence of Rickettsia canadensis.</title>
        <authorList>
            <person name="Madan A."/>
            <person name="Fahey J."/>
            <person name="Helton E."/>
            <person name="Ketteman M."/>
            <person name="Madan A."/>
            <person name="Rodrigues S."/>
            <person name="Sanchez A."/>
            <person name="Whiting M."/>
            <person name="Dasch G."/>
            <person name="Eremeeva M."/>
        </authorList>
    </citation>
    <scope>NUCLEOTIDE SEQUENCE [LARGE SCALE GENOMIC DNA]</scope>
    <source>
        <strain>McKiel</strain>
    </source>
</reference>
<sequence>MITKEEAQKIAKLARLKFEEDTVEKFSTQLSSIMNMIDILNEIDCKDIEPLTSVSNMNARMREDEVTSSDLSDKLLDHVSGQSAQLAKEVKYFITPKVIE</sequence>